<sequence length="344" mass="36719">MLTLGLESSCDETACAIVNEDKQILANIIASQDIHASYGGVVPELASRAHLHIFPQVINKALQQANLLIEDMDLIAVTQTPGLIGSLSVGVHFGKGIAIGAKKSLIGVNHVEAHLYAAYMAAQNVQFPALGLVVSGAHTAAFFIENPTSYKLIGKTRDDAIGETFDKVGRFLGLPYPAGPLIEKLALEGSEDSYPFSPAKVPNYDFSFSGLKTAVLYAIKGNNSSPRSPAPEISLEKQRDIAASFQKAACTTIAQKLPTIIKEFSCRSILIGGGVAINEYFRSAIQTACNLPVYFPPAKLCSDNAAMIAGLGGENFQKNSSIPEIRICARYQWESVSPFSLASP</sequence>
<proteinExistence type="inferred from homology"/>
<dbReference type="EC" id="2.3.1.234" evidence="1"/>
<dbReference type="EMBL" id="AE001363">
    <property type="protein sequence ID" value="AAD18347.1"/>
    <property type="molecule type" value="Genomic_DNA"/>
</dbReference>
<dbReference type="EMBL" id="AE002161">
    <property type="protein sequence ID" value="AAF73688.1"/>
    <property type="molecule type" value="Genomic_DNA"/>
</dbReference>
<dbReference type="EMBL" id="AE009440">
    <property type="protein sequence ID" value="AAP98130.1"/>
    <property type="molecule type" value="Genomic_DNA"/>
</dbReference>
<dbReference type="EMBL" id="BA000008">
    <property type="protein sequence ID" value="BAA98404.1"/>
    <property type="molecule type" value="Genomic_DNA"/>
</dbReference>
<dbReference type="PIR" id="B86515">
    <property type="entry name" value="B86515"/>
</dbReference>
<dbReference type="PIR" id="H72106">
    <property type="entry name" value="H72106"/>
</dbReference>
<dbReference type="RefSeq" id="NP_224403.1">
    <property type="nucleotide sequence ID" value="NC_000922.1"/>
</dbReference>
<dbReference type="RefSeq" id="WP_010882845.1">
    <property type="nucleotide sequence ID" value="NZ_LN847257.1"/>
</dbReference>
<dbReference type="SMR" id="Q9Z8Z0"/>
<dbReference type="STRING" id="406984.CPK_ORF00700"/>
<dbReference type="GeneID" id="45050240"/>
<dbReference type="KEGG" id="cpa:CP_0573"/>
<dbReference type="KEGG" id="cpj:gcp_2"/>
<dbReference type="KEGG" id="cpn:CPn_0194"/>
<dbReference type="KEGG" id="cpt:CpB0197"/>
<dbReference type="PATRIC" id="fig|115713.3.peg.219"/>
<dbReference type="eggNOG" id="COG0533">
    <property type="taxonomic scope" value="Bacteria"/>
</dbReference>
<dbReference type="HOGENOM" id="CLU_023208_0_2_0"/>
<dbReference type="OrthoDB" id="9806197at2"/>
<dbReference type="Proteomes" id="UP000000583">
    <property type="component" value="Chromosome"/>
</dbReference>
<dbReference type="Proteomes" id="UP000000801">
    <property type="component" value="Chromosome"/>
</dbReference>
<dbReference type="GO" id="GO:0005737">
    <property type="term" value="C:cytoplasm"/>
    <property type="evidence" value="ECO:0007669"/>
    <property type="project" value="UniProtKB-SubCell"/>
</dbReference>
<dbReference type="GO" id="GO:0005506">
    <property type="term" value="F:iron ion binding"/>
    <property type="evidence" value="ECO:0007669"/>
    <property type="project" value="UniProtKB-UniRule"/>
</dbReference>
<dbReference type="GO" id="GO:0061711">
    <property type="term" value="F:N(6)-L-threonylcarbamoyladenine synthase activity"/>
    <property type="evidence" value="ECO:0007669"/>
    <property type="project" value="UniProtKB-EC"/>
</dbReference>
<dbReference type="GO" id="GO:0002949">
    <property type="term" value="P:tRNA threonylcarbamoyladenosine modification"/>
    <property type="evidence" value="ECO:0007669"/>
    <property type="project" value="UniProtKB-UniRule"/>
</dbReference>
<dbReference type="CDD" id="cd24133">
    <property type="entry name" value="ASKHA_NBD_TsaD_bac"/>
    <property type="match status" value="1"/>
</dbReference>
<dbReference type="FunFam" id="3.30.420.40:FF:000012">
    <property type="entry name" value="tRNA N6-adenosine threonylcarbamoyltransferase"/>
    <property type="match status" value="1"/>
</dbReference>
<dbReference type="Gene3D" id="3.30.420.40">
    <property type="match status" value="2"/>
</dbReference>
<dbReference type="HAMAP" id="MF_01445">
    <property type="entry name" value="TsaD"/>
    <property type="match status" value="1"/>
</dbReference>
<dbReference type="InterPro" id="IPR043129">
    <property type="entry name" value="ATPase_NBD"/>
</dbReference>
<dbReference type="InterPro" id="IPR000905">
    <property type="entry name" value="Gcp-like_dom"/>
</dbReference>
<dbReference type="InterPro" id="IPR017861">
    <property type="entry name" value="KAE1/TsaD"/>
</dbReference>
<dbReference type="InterPro" id="IPR022450">
    <property type="entry name" value="TsaD"/>
</dbReference>
<dbReference type="NCBIfam" id="TIGR00329">
    <property type="entry name" value="gcp_kae1"/>
    <property type="match status" value="1"/>
</dbReference>
<dbReference type="NCBIfam" id="TIGR03723">
    <property type="entry name" value="T6A_TsaD_YgjD"/>
    <property type="match status" value="1"/>
</dbReference>
<dbReference type="PANTHER" id="PTHR11735">
    <property type="entry name" value="TRNA N6-ADENOSINE THREONYLCARBAMOYLTRANSFERASE"/>
    <property type="match status" value="1"/>
</dbReference>
<dbReference type="PANTHER" id="PTHR11735:SF6">
    <property type="entry name" value="TRNA N6-ADENOSINE THREONYLCARBAMOYLTRANSFERASE, MITOCHONDRIAL"/>
    <property type="match status" value="1"/>
</dbReference>
<dbReference type="Pfam" id="PF00814">
    <property type="entry name" value="TsaD"/>
    <property type="match status" value="1"/>
</dbReference>
<dbReference type="PRINTS" id="PR00789">
    <property type="entry name" value="OSIALOPTASE"/>
</dbReference>
<dbReference type="SUPFAM" id="SSF53067">
    <property type="entry name" value="Actin-like ATPase domain"/>
    <property type="match status" value="1"/>
</dbReference>
<evidence type="ECO:0000255" key="1">
    <source>
        <dbReference type="HAMAP-Rule" id="MF_01445"/>
    </source>
</evidence>
<feature type="chain" id="PRO_0000303316" description="tRNA N6-adenosine threonylcarbamoyltransferase">
    <location>
        <begin position="1"/>
        <end position="344"/>
    </location>
</feature>
<feature type="binding site" evidence="1">
    <location>
        <position position="110"/>
    </location>
    <ligand>
        <name>Fe cation</name>
        <dbReference type="ChEBI" id="CHEBI:24875"/>
    </ligand>
</feature>
<feature type="binding site" evidence="1">
    <location>
        <position position="114"/>
    </location>
    <ligand>
        <name>Fe cation</name>
        <dbReference type="ChEBI" id="CHEBI:24875"/>
    </ligand>
</feature>
<feature type="binding site" evidence="1">
    <location>
        <begin position="133"/>
        <end position="137"/>
    </location>
    <ligand>
        <name>substrate</name>
    </ligand>
</feature>
<feature type="binding site" evidence="1">
    <location>
        <position position="166"/>
    </location>
    <ligand>
        <name>substrate</name>
    </ligand>
</feature>
<feature type="binding site" evidence="1">
    <location>
        <position position="179"/>
    </location>
    <ligand>
        <name>substrate</name>
    </ligand>
</feature>
<feature type="binding site" evidence="1">
    <location>
        <position position="278"/>
    </location>
    <ligand>
        <name>substrate</name>
    </ligand>
</feature>
<feature type="binding site" evidence="1">
    <location>
        <position position="303"/>
    </location>
    <ligand>
        <name>Fe cation</name>
        <dbReference type="ChEBI" id="CHEBI:24875"/>
    </ligand>
</feature>
<comment type="function">
    <text evidence="1">Required for the formation of a threonylcarbamoyl group on adenosine at position 37 (t(6)A37) in tRNAs that read codons beginning with adenine. Is involved in the transfer of the threonylcarbamoyl moiety of threonylcarbamoyl-AMP (TC-AMP) to the N6 group of A37, together with TsaE and TsaB. TsaD likely plays a direct catalytic role in this reaction.</text>
</comment>
<comment type="catalytic activity">
    <reaction evidence="1">
        <text>L-threonylcarbamoyladenylate + adenosine(37) in tRNA = N(6)-L-threonylcarbamoyladenosine(37) in tRNA + AMP + H(+)</text>
        <dbReference type="Rhea" id="RHEA:37059"/>
        <dbReference type="Rhea" id="RHEA-COMP:10162"/>
        <dbReference type="Rhea" id="RHEA-COMP:10163"/>
        <dbReference type="ChEBI" id="CHEBI:15378"/>
        <dbReference type="ChEBI" id="CHEBI:73682"/>
        <dbReference type="ChEBI" id="CHEBI:74411"/>
        <dbReference type="ChEBI" id="CHEBI:74418"/>
        <dbReference type="ChEBI" id="CHEBI:456215"/>
        <dbReference type="EC" id="2.3.1.234"/>
    </reaction>
</comment>
<comment type="cofactor">
    <cofactor evidence="1">
        <name>Fe(2+)</name>
        <dbReference type="ChEBI" id="CHEBI:29033"/>
    </cofactor>
    <text evidence="1">Binds 1 Fe(2+) ion per subunit.</text>
</comment>
<comment type="subcellular location">
    <subcellularLocation>
        <location evidence="1">Cytoplasm</location>
    </subcellularLocation>
</comment>
<comment type="similarity">
    <text evidence="1">Belongs to the KAE1 / TsaD family.</text>
</comment>
<keyword id="KW-0012">Acyltransferase</keyword>
<keyword id="KW-0963">Cytoplasm</keyword>
<keyword id="KW-0408">Iron</keyword>
<keyword id="KW-0479">Metal-binding</keyword>
<keyword id="KW-0808">Transferase</keyword>
<keyword id="KW-0819">tRNA processing</keyword>
<accession>Q9Z8Z0</accession>
<accession>Q7AJ73</accession>
<accession>Q7BXQ8</accession>
<accession>Q7DEH2</accession>
<reference key="1">
    <citation type="journal article" date="1999" name="Nat. Genet.">
        <title>Comparative genomes of Chlamydia pneumoniae and C. trachomatis.</title>
        <authorList>
            <person name="Kalman S."/>
            <person name="Mitchell W.P."/>
            <person name="Marathe R."/>
            <person name="Lammel C.J."/>
            <person name="Fan J."/>
            <person name="Hyman R.W."/>
            <person name="Olinger L."/>
            <person name="Grimwood J."/>
            <person name="Davis R.W."/>
            <person name="Stephens R.S."/>
        </authorList>
    </citation>
    <scope>NUCLEOTIDE SEQUENCE [LARGE SCALE GENOMIC DNA]</scope>
    <source>
        <strain>CWL029</strain>
    </source>
</reference>
<reference key="2">
    <citation type="journal article" date="2000" name="Nucleic Acids Res.">
        <title>Comparison of whole genome sequences of Chlamydia pneumoniae J138 from Japan and CWL029 from USA.</title>
        <authorList>
            <person name="Shirai M."/>
            <person name="Hirakawa H."/>
            <person name="Kimoto M."/>
            <person name="Tabuchi M."/>
            <person name="Kishi F."/>
            <person name="Ouchi K."/>
            <person name="Shiba T."/>
            <person name="Ishii K."/>
            <person name="Hattori M."/>
            <person name="Kuhara S."/>
            <person name="Nakazawa T."/>
        </authorList>
    </citation>
    <scope>NUCLEOTIDE SEQUENCE [LARGE SCALE GENOMIC DNA]</scope>
    <source>
        <strain>J138</strain>
    </source>
</reference>
<reference key="3">
    <citation type="submission" date="2002-05" db="EMBL/GenBank/DDBJ databases">
        <title>The genome sequence of Chlamydia pneumoniae TW183 and comparison with other Chlamydia strains based on whole genome sequence analysis.</title>
        <authorList>
            <person name="Geng M.M."/>
            <person name="Schuhmacher A."/>
            <person name="Muehldorfer I."/>
            <person name="Bensch K.W."/>
            <person name="Schaefer K.P."/>
            <person name="Schneider S."/>
            <person name="Pohl T."/>
            <person name="Essig A."/>
            <person name="Marre R."/>
            <person name="Melchers K."/>
        </authorList>
    </citation>
    <scope>NUCLEOTIDE SEQUENCE [LARGE SCALE GENOMIC DNA]</scope>
    <source>
        <strain>TW-183</strain>
    </source>
</reference>
<reference key="4">
    <citation type="journal article" date="2000" name="Nucleic Acids Res.">
        <title>Genome sequences of Chlamydia trachomatis MoPn and Chlamydia pneumoniae AR39.</title>
        <authorList>
            <person name="Read T.D."/>
            <person name="Brunham R.C."/>
            <person name="Shen C."/>
            <person name="Gill S.R."/>
            <person name="Heidelberg J.F."/>
            <person name="White O."/>
            <person name="Hickey E.K."/>
            <person name="Peterson J.D."/>
            <person name="Utterback T.R."/>
            <person name="Berry K.J."/>
            <person name="Bass S."/>
            <person name="Linher K.D."/>
            <person name="Weidman J.F."/>
            <person name="Khouri H.M."/>
            <person name="Craven B."/>
            <person name="Bowman C."/>
            <person name="Dodson R.J."/>
            <person name="Gwinn M.L."/>
            <person name="Nelson W.C."/>
            <person name="DeBoy R.T."/>
            <person name="Kolonay J.F."/>
            <person name="McClarty G."/>
            <person name="Salzberg S.L."/>
            <person name="Eisen J.A."/>
            <person name="Fraser C.M."/>
        </authorList>
    </citation>
    <scope>NUCLEOTIDE SEQUENCE [LARGE SCALE GENOMIC DNA]</scope>
    <source>
        <strain>AR39</strain>
    </source>
</reference>
<name>TSAD_CHLPN</name>
<organism>
    <name type="scientific">Chlamydia pneumoniae</name>
    <name type="common">Chlamydophila pneumoniae</name>
    <dbReference type="NCBI Taxonomy" id="83558"/>
    <lineage>
        <taxon>Bacteria</taxon>
        <taxon>Pseudomonadati</taxon>
        <taxon>Chlamydiota</taxon>
        <taxon>Chlamydiia</taxon>
        <taxon>Chlamydiales</taxon>
        <taxon>Chlamydiaceae</taxon>
        <taxon>Chlamydia/Chlamydophila group</taxon>
        <taxon>Chlamydia</taxon>
    </lineage>
</organism>
<gene>
    <name evidence="1" type="primary">tsaD</name>
    <name type="synonym">gcp</name>
    <name type="ordered locus">CPn_0194</name>
    <name type="ordered locus">CP_0573</name>
    <name type="ordered locus">CpB0197</name>
</gene>
<protein>
    <recommendedName>
        <fullName evidence="1">tRNA N6-adenosine threonylcarbamoyltransferase</fullName>
        <ecNumber evidence="1">2.3.1.234</ecNumber>
    </recommendedName>
    <alternativeName>
        <fullName evidence="1">N6-L-threonylcarbamoyladenine synthase</fullName>
        <shortName evidence="1">t(6)A synthase</shortName>
    </alternativeName>
    <alternativeName>
        <fullName evidence="1">t(6)A37 threonylcarbamoyladenosine biosynthesis protein TsaD</fullName>
    </alternativeName>
    <alternativeName>
        <fullName evidence="1">tRNA threonylcarbamoyladenosine biosynthesis protein TsaD</fullName>
    </alternativeName>
</protein>